<reference key="1">
    <citation type="journal article" date="2002" name="Proc. Natl. Acad. Sci. U.S.A.">
        <title>Extensive mosaic structure revealed by the complete genome sequence of uropathogenic Escherichia coli.</title>
        <authorList>
            <person name="Welch R.A."/>
            <person name="Burland V."/>
            <person name="Plunkett G. III"/>
            <person name="Redford P."/>
            <person name="Roesch P."/>
            <person name="Rasko D."/>
            <person name="Buckles E.L."/>
            <person name="Liou S.-R."/>
            <person name="Boutin A."/>
            <person name="Hackett J."/>
            <person name="Stroud D."/>
            <person name="Mayhew G.F."/>
            <person name="Rose D.J."/>
            <person name="Zhou S."/>
            <person name="Schwartz D.C."/>
            <person name="Perna N.T."/>
            <person name="Mobley H.L.T."/>
            <person name="Donnenberg M.S."/>
            <person name="Blattner F.R."/>
        </authorList>
    </citation>
    <scope>NUCLEOTIDE SEQUENCE [LARGE SCALE GENOMIC DNA]</scope>
    <source>
        <strain>CFT073 / ATCC 700928 / UPEC</strain>
    </source>
</reference>
<comment type="catalytic activity">
    <reaction evidence="1">
        <text>L-tryptophan + H2O = indole + pyruvate + NH4(+)</text>
        <dbReference type="Rhea" id="RHEA:19553"/>
        <dbReference type="ChEBI" id="CHEBI:15361"/>
        <dbReference type="ChEBI" id="CHEBI:15377"/>
        <dbReference type="ChEBI" id="CHEBI:16881"/>
        <dbReference type="ChEBI" id="CHEBI:28938"/>
        <dbReference type="ChEBI" id="CHEBI:57912"/>
        <dbReference type="EC" id="4.1.99.1"/>
    </reaction>
</comment>
<comment type="cofactor">
    <cofactor evidence="1">
        <name>pyridoxal 5'-phosphate</name>
        <dbReference type="ChEBI" id="CHEBI:597326"/>
    </cofactor>
</comment>
<comment type="pathway">
    <text evidence="1">Amino-acid degradation; L-tryptophan degradation via pyruvate pathway; indole and pyruvate from L-tryptophan: step 1/1.</text>
</comment>
<comment type="subunit">
    <text evidence="1">Homotetramer.</text>
</comment>
<comment type="similarity">
    <text evidence="1">Belongs to the beta-eliminating lyase family.</text>
</comment>
<comment type="sequence caution" evidence="2">
    <conflict type="erroneous initiation">
        <sequence resource="EMBL-CDS" id="AAN83063"/>
    </conflict>
</comment>
<gene>
    <name evidence="1" type="primary">tnaA</name>
    <name type="ordered locus">c4631</name>
</gene>
<keyword id="KW-0007">Acetylation</keyword>
<keyword id="KW-0456">Lyase</keyword>
<keyword id="KW-0663">Pyridoxal phosphate</keyword>
<keyword id="KW-1185">Reference proteome</keyword>
<keyword id="KW-0823">Tryptophan catabolism</keyword>
<organism>
    <name type="scientific">Escherichia coli O6:H1 (strain CFT073 / ATCC 700928 / UPEC)</name>
    <dbReference type="NCBI Taxonomy" id="199310"/>
    <lineage>
        <taxon>Bacteria</taxon>
        <taxon>Pseudomonadati</taxon>
        <taxon>Pseudomonadota</taxon>
        <taxon>Gammaproteobacteria</taxon>
        <taxon>Enterobacterales</taxon>
        <taxon>Enterobacteriaceae</taxon>
        <taxon>Escherichia</taxon>
    </lineage>
</organism>
<accession>Q8FBV2</accession>
<dbReference type="EC" id="4.1.99.1" evidence="1"/>
<dbReference type="EMBL" id="AE014075">
    <property type="protein sequence ID" value="AAN83063.1"/>
    <property type="status" value="ALT_INIT"/>
    <property type="molecule type" value="Genomic_DNA"/>
</dbReference>
<dbReference type="RefSeq" id="WP_001443186.1">
    <property type="nucleotide sequence ID" value="NZ_CP051263.1"/>
</dbReference>
<dbReference type="SMR" id="Q8FBV2"/>
<dbReference type="IntAct" id="Q8FBV2">
    <property type="interactions" value="1"/>
</dbReference>
<dbReference type="STRING" id="199310.c4631"/>
<dbReference type="KEGG" id="ecc:c4631"/>
<dbReference type="eggNOG" id="COG3033">
    <property type="taxonomic scope" value="Bacteria"/>
</dbReference>
<dbReference type="HOGENOM" id="CLU_047223_0_0_6"/>
<dbReference type="UniPathway" id="UPA00332">
    <property type="reaction ID" value="UER00452"/>
</dbReference>
<dbReference type="Proteomes" id="UP000001410">
    <property type="component" value="Chromosome"/>
</dbReference>
<dbReference type="GO" id="GO:0009034">
    <property type="term" value="F:tryptophanase activity"/>
    <property type="evidence" value="ECO:0007669"/>
    <property type="project" value="UniProtKB-UniRule"/>
</dbReference>
<dbReference type="FunFam" id="3.40.640.10:FF:000039">
    <property type="entry name" value="Tryptophanase"/>
    <property type="match status" value="1"/>
</dbReference>
<dbReference type="Gene3D" id="3.90.1150.10">
    <property type="entry name" value="Aspartate Aminotransferase, domain 1"/>
    <property type="match status" value="1"/>
</dbReference>
<dbReference type="Gene3D" id="3.40.640.10">
    <property type="entry name" value="Type I PLP-dependent aspartate aminotransferase-like (Major domain)"/>
    <property type="match status" value="1"/>
</dbReference>
<dbReference type="HAMAP" id="MF_00544">
    <property type="entry name" value="Tryptophanase"/>
    <property type="match status" value="1"/>
</dbReference>
<dbReference type="InterPro" id="IPR001597">
    <property type="entry name" value="ArAA_b-elim_lyase/Thr_aldolase"/>
</dbReference>
<dbReference type="InterPro" id="IPR011166">
    <property type="entry name" value="Beta-eliminating_lyase"/>
</dbReference>
<dbReference type="InterPro" id="IPR015424">
    <property type="entry name" value="PyrdxlP-dep_Trfase"/>
</dbReference>
<dbReference type="InterPro" id="IPR015421">
    <property type="entry name" value="PyrdxlP-dep_Trfase_major"/>
</dbReference>
<dbReference type="InterPro" id="IPR015422">
    <property type="entry name" value="PyrdxlP-dep_Trfase_small"/>
</dbReference>
<dbReference type="InterPro" id="IPR013440">
    <property type="entry name" value="TNase"/>
</dbReference>
<dbReference type="InterPro" id="IPR018176">
    <property type="entry name" value="Tryptophanase_CS"/>
</dbReference>
<dbReference type="NCBIfam" id="NF009709">
    <property type="entry name" value="PRK13238.1"/>
    <property type="match status" value="1"/>
</dbReference>
<dbReference type="NCBIfam" id="TIGR02617">
    <property type="entry name" value="tnaA_trp_ase"/>
    <property type="match status" value="1"/>
</dbReference>
<dbReference type="PANTHER" id="PTHR32325">
    <property type="entry name" value="BETA-ELIMINATING LYASE-LIKE PROTEIN-RELATED"/>
    <property type="match status" value="1"/>
</dbReference>
<dbReference type="PANTHER" id="PTHR32325:SF4">
    <property type="entry name" value="TRYPTOPHANASE"/>
    <property type="match status" value="1"/>
</dbReference>
<dbReference type="Pfam" id="PF01212">
    <property type="entry name" value="Beta_elim_lyase"/>
    <property type="match status" value="1"/>
</dbReference>
<dbReference type="PIRSF" id="PIRSF001386">
    <property type="entry name" value="Trpase"/>
    <property type="match status" value="1"/>
</dbReference>
<dbReference type="SUPFAM" id="SSF53383">
    <property type="entry name" value="PLP-dependent transferases"/>
    <property type="match status" value="1"/>
</dbReference>
<dbReference type="PROSITE" id="PS00853">
    <property type="entry name" value="BETA_ELIM_LYASE"/>
    <property type="match status" value="1"/>
</dbReference>
<protein>
    <recommendedName>
        <fullName evidence="1">Tryptophanase</fullName>
        <ecNumber evidence="1">4.1.99.1</ecNumber>
    </recommendedName>
    <alternativeName>
        <fullName evidence="1">L-tryptophan indole-lyase</fullName>
        <shortName evidence="1">TNase</shortName>
    </alternativeName>
</protein>
<proteinExistence type="inferred from homology"/>
<evidence type="ECO:0000255" key="1">
    <source>
        <dbReference type="HAMAP-Rule" id="MF_00544"/>
    </source>
</evidence>
<evidence type="ECO:0000305" key="2"/>
<sequence>MENFKHLPEPFRIRVIEPVKRTTRAYREEAIIKSGMNPFLLDSEDVFIDLLTDSGTGAVTQSMQAAMMRGDEAYSGSRSYYALAESVKNIFGYQYTIPTHQGRGAEQIYIPVLIKKREQEKGLDRSKMVAFSNYFFDTTQGHSQINGCTVRNVYIKEAFDTGVRYDFKGNFDLEGLERGIEEVGPNNVPYIVATITSNSAGGQPVSLANLKVMYSIAKKYDIPVVMDSARFAENAYFIKQREAEYKDWTIEQITRETYKYADMLAMSAKKDAMVPMGGLLCMKDDSFFDVYTECRTLCVVQEGFPTYGGLEGGAMERLAVGLYDGMNLDWLAYRIAQVQYLVDGLEEIGVVCQQAGGHAAFVDAGKLLPHIPADQFPAQALACELYKVAGIRAVEIGSFLLGRDPKTGKQLPCPAELLRLTIPRATYTQTHMDFIIEAFKHVKENAANIKGLTFTYEPKVLRHFTAKLKEV</sequence>
<feature type="chain" id="PRO_0000195613" description="Tryptophanase">
    <location>
        <begin position="1"/>
        <end position="471"/>
    </location>
</feature>
<feature type="modified residue" description="N6-acetyllysine" evidence="1">
    <location>
        <position position="5"/>
    </location>
</feature>
<feature type="modified residue" description="N6-acetyllysine" evidence="1">
    <location>
        <position position="115"/>
    </location>
</feature>
<feature type="modified residue" description="N6-acetyllysine" evidence="1">
    <location>
        <position position="156"/>
    </location>
</feature>
<feature type="modified residue" description="N6-(pyridoxal phosphate)lysine" evidence="1">
    <location>
        <position position="270"/>
    </location>
</feature>
<feature type="modified residue" description="N6-acetyllysine" evidence="1">
    <location>
        <position position="450"/>
    </location>
</feature>
<name>TNAA_ECOL6</name>